<dbReference type="EMBL" id="BA000022">
    <property type="protein sequence ID" value="BAA17021.1"/>
    <property type="molecule type" value="Genomic_DNA"/>
</dbReference>
<dbReference type="PIR" id="S74981">
    <property type="entry name" value="S74981"/>
</dbReference>
<dbReference type="SMR" id="P73001"/>
<dbReference type="IntAct" id="P73001">
    <property type="interactions" value="4"/>
</dbReference>
<dbReference type="STRING" id="1148.gene:10497882"/>
<dbReference type="PaxDb" id="1148-1652096"/>
<dbReference type="EnsemblBacteria" id="BAA17021">
    <property type="protein sequence ID" value="BAA17021"/>
    <property type="gene ID" value="BAA17021"/>
</dbReference>
<dbReference type="KEGG" id="syn:slr1608"/>
<dbReference type="eggNOG" id="COG2133">
    <property type="taxonomic scope" value="Bacteria"/>
</dbReference>
<dbReference type="InParanoid" id="P73001"/>
<dbReference type="PhylomeDB" id="P73001"/>
<dbReference type="Proteomes" id="UP000001425">
    <property type="component" value="Chromosome"/>
</dbReference>
<dbReference type="GO" id="GO:0030288">
    <property type="term" value="C:outer membrane-bounded periplasmic space"/>
    <property type="evidence" value="ECO:0007005"/>
    <property type="project" value="UniProtKB"/>
</dbReference>
<dbReference type="GO" id="GO:0016491">
    <property type="term" value="F:oxidoreductase activity"/>
    <property type="evidence" value="ECO:0007669"/>
    <property type="project" value="UniProtKB-KW"/>
</dbReference>
<dbReference type="Gene3D" id="2.120.10.30">
    <property type="entry name" value="TolB, C-terminal domain"/>
    <property type="match status" value="1"/>
</dbReference>
<dbReference type="InterPro" id="IPR011042">
    <property type="entry name" value="6-blade_b-propeller_TolB-like"/>
</dbReference>
<dbReference type="InterPro" id="IPR012938">
    <property type="entry name" value="Glc/Sorbosone_DH"/>
</dbReference>
<dbReference type="InterPro" id="IPR011041">
    <property type="entry name" value="Quinoprot_gluc/sorb_DH_b-prop"/>
</dbReference>
<dbReference type="PANTHER" id="PTHR19328:SF75">
    <property type="entry name" value="ALDOSE SUGAR DEHYDROGENASE YLII"/>
    <property type="match status" value="1"/>
</dbReference>
<dbReference type="PANTHER" id="PTHR19328">
    <property type="entry name" value="HEDGEHOG-INTERACTING PROTEIN"/>
    <property type="match status" value="1"/>
</dbReference>
<dbReference type="Pfam" id="PF07995">
    <property type="entry name" value="GSDH"/>
    <property type="match status" value="1"/>
</dbReference>
<dbReference type="SUPFAM" id="SSF50952">
    <property type="entry name" value="Soluble quinoprotein glucose dehydrogenase"/>
    <property type="match status" value="1"/>
</dbReference>
<keyword id="KW-0560">Oxidoreductase</keyword>
<keyword id="KW-0634">PQQ</keyword>
<keyword id="KW-1185">Reference proteome</keyword>
<proteinExistence type="inferred from homology"/>
<protein>
    <recommendedName>
        <fullName>Uncharacterized protein slr1608</fullName>
    </recommendedName>
</protein>
<accession>P73001</accession>
<organism>
    <name type="scientific">Synechocystis sp. (strain ATCC 27184 / PCC 6803 / Kazusa)</name>
    <dbReference type="NCBI Taxonomy" id="1111708"/>
    <lineage>
        <taxon>Bacteria</taxon>
        <taxon>Bacillati</taxon>
        <taxon>Cyanobacteriota</taxon>
        <taxon>Cyanophyceae</taxon>
        <taxon>Synechococcales</taxon>
        <taxon>Merismopediaceae</taxon>
        <taxon>Synechocystis</taxon>
    </lineage>
</organism>
<gene>
    <name type="ordered locus">slr1608</name>
</gene>
<feature type="chain" id="PRO_0000217677" description="Uncharacterized protein slr1608">
    <location>
        <begin position="1"/>
        <end position="412"/>
    </location>
</feature>
<evidence type="ECO:0000305" key="1"/>
<name>Y1608_SYNY3</name>
<sequence length="412" mass="45120">MLIPFLFKLTLPLASGIALSSCGTLPEADLGTAAGNQTSSEPTNSVEIVQANQPEIKAVPVIDGLEHPWGMAWLPNGDILITERPGRLRIVRDGVLDPEAIAGVVAVSTVSAQQLFASQQGGLLDIALHPRFAENRFVYFTYSHGTQQANRTRVARAVFDGEKLTDWQVIFEVGQTKPGGQHFGSRLTWLPDETLLVSIGDGGNPPVELEGDFIRQQAQNRASHLGKIIRINDDGTVPADNPFRNDPKAAPEVWSYGHRNIQGLAYDPVTQKVWATEHGSRGGDELNLIQKGKNYGWPVVSFSKEYSTDQPVAPATSRPDMVDPLQIWTPAIAPSGLTIYNGDRHPEWQGTIFAGGLVDRGIRHLRLDENNQIIDETTISIGQRVRDVRQGPDGHVYVLTDQNNGQLLRLES</sequence>
<reference key="1">
    <citation type="journal article" date="1996" name="DNA Res.">
        <title>Sequence analysis of the genome of the unicellular cyanobacterium Synechocystis sp. strain PCC6803. II. Sequence determination of the entire genome and assignment of potential protein-coding regions.</title>
        <authorList>
            <person name="Kaneko T."/>
            <person name="Sato S."/>
            <person name="Kotani H."/>
            <person name="Tanaka A."/>
            <person name="Asamizu E."/>
            <person name="Nakamura Y."/>
            <person name="Miyajima N."/>
            <person name="Hirosawa M."/>
            <person name="Sugiura M."/>
            <person name="Sasamoto S."/>
            <person name="Kimura T."/>
            <person name="Hosouchi T."/>
            <person name="Matsuno A."/>
            <person name="Muraki A."/>
            <person name="Nakazaki N."/>
            <person name="Naruo K."/>
            <person name="Okumura S."/>
            <person name="Shimpo S."/>
            <person name="Takeuchi C."/>
            <person name="Wada T."/>
            <person name="Watanabe A."/>
            <person name="Yamada M."/>
            <person name="Yasuda M."/>
            <person name="Tabata S."/>
        </authorList>
    </citation>
    <scope>NUCLEOTIDE SEQUENCE [LARGE SCALE GENOMIC DNA]</scope>
    <source>
        <strain>ATCC 27184 / PCC 6803 / Kazusa</strain>
    </source>
</reference>
<comment type="cofactor">
    <cofactor evidence="1">
        <name>pyrroloquinoline quinone</name>
        <dbReference type="ChEBI" id="CHEBI:58442"/>
    </cofactor>
</comment>
<comment type="similarity">
    <text evidence="1">Belongs to the PQQ oxidoreductase GdhB family.</text>
</comment>